<evidence type="ECO:0000255" key="1">
    <source>
        <dbReference type="HAMAP-Rule" id="MF_01337"/>
    </source>
</evidence>
<evidence type="ECO:0000305" key="2"/>
<sequence>MSNKNEALLRRKARVRRALRAAANGRPRLSVFRSSKQIYVQVIDDAAGRTLAAASSLDKDLKSSLKTGADKAAAEAVGKLVAERAKAAGVTKVVFDRSGYIFHGRVKALADAAREGGLDF</sequence>
<accession>B7L0T4</accession>
<feature type="chain" id="PRO_1000166238" description="Large ribosomal subunit protein uL18">
    <location>
        <begin position="1"/>
        <end position="120"/>
    </location>
</feature>
<organism>
    <name type="scientific">Methylorubrum extorquens (strain CM4 / NCIMB 13688)</name>
    <name type="common">Methylobacterium extorquens</name>
    <dbReference type="NCBI Taxonomy" id="440085"/>
    <lineage>
        <taxon>Bacteria</taxon>
        <taxon>Pseudomonadati</taxon>
        <taxon>Pseudomonadota</taxon>
        <taxon>Alphaproteobacteria</taxon>
        <taxon>Hyphomicrobiales</taxon>
        <taxon>Methylobacteriaceae</taxon>
        <taxon>Methylorubrum</taxon>
    </lineage>
</organism>
<keyword id="KW-0687">Ribonucleoprotein</keyword>
<keyword id="KW-0689">Ribosomal protein</keyword>
<keyword id="KW-0694">RNA-binding</keyword>
<keyword id="KW-0699">rRNA-binding</keyword>
<protein>
    <recommendedName>
        <fullName evidence="1">Large ribosomal subunit protein uL18</fullName>
    </recommendedName>
    <alternativeName>
        <fullName evidence="2">50S ribosomal protein L18</fullName>
    </alternativeName>
</protein>
<dbReference type="EMBL" id="CP001298">
    <property type="protein sequence ID" value="ACK83305.1"/>
    <property type="molecule type" value="Genomic_DNA"/>
</dbReference>
<dbReference type="RefSeq" id="WP_003597133.1">
    <property type="nucleotide sequence ID" value="NC_011757.1"/>
</dbReference>
<dbReference type="SMR" id="B7L0T4"/>
<dbReference type="GeneID" id="72989873"/>
<dbReference type="KEGG" id="mch:Mchl_2463"/>
<dbReference type="HOGENOM" id="CLU_098841_0_1_5"/>
<dbReference type="Proteomes" id="UP000002385">
    <property type="component" value="Chromosome"/>
</dbReference>
<dbReference type="GO" id="GO:0022625">
    <property type="term" value="C:cytosolic large ribosomal subunit"/>
    <property type="evidence" value="ECO:0007669"/>
    <property type="project" value="TreeGrafter"/>
</dbReference>
<dbReference type="GO" id="GO:0008097">
    <property type="term" value="F:5S rRNA binding"/>
    <property type="evidence" value="ECO:0007669"/>
    <property type="project" value="TreeGrafter"/>
</dbReference>
<dbReference type="GO" id="GO:0003735">
    <property type="term" value="F:structural constituent of ribosome"/>
    <property type="evidence" value="ECO:0007669"/>
    <property type="project" value="InterPro"/>
</dbReference>
<dbReference type="GO" id="GO:0006412">
    <property type="term" value="P:translation"/>
    <property type="evidence" value="ECO:0007669"/>
    <property type="project" value="UniProtKB-UniRule"/>
</dbReference>
<dbReference type="CDD" id="cd00432">
    <property type="entry name" value="Ribosomal_L18_L5e"/>
    <property type="match status" value="1"/>
</dbReference>
<dbReference type="FunFam" id="3.30.420.100:FF:000001">
    <property type="entry name" value="50S ribosomal protein L18"/>
    <property type="match status" value="1"/>
</dbReference>
<dbReference type="Gene3D" id="3.30.420.100">
    <property type="match status" value="1"/>
</dbReference>
<dbReference type="HAMAP" id="MF_01337_B">
    <property type="entry name" value="Ribosomal_uL18_B"/>
    <property type="match status" value="1"/>
</dbReference>
<dbReference type="InterPro" id="IPR004389">
    <property type="entry name" value="Ribosomal_uL18_bac-type"/>
</dbReference>
<dbReference type="InterPro" id="IPR005484">
    <property type="entry name" value="Ribosomal_uL18_bac/euk"/>
</dbReference>
<dbReference type="NCBIfam" id="TIGR00060">
    <property type="entry name" value="L18_bact"/>
    <property type="match status" value="1"/>
</dbReference>
<dbReference type="PANTHER" id="PTHR12899">
    <property type="entry name" value="39S RIBOSOMAL PROTEIN L18, MITOCHONDRIAL"/>
    <property type="match status" value="1"/>
</dbReference>
<dbReference type="PANTHER" id="PTHR12899:SF3">
    <property type="entry name" value="LARGE RIBOSOMAL SUBUNIT PROTEIN UL18M"/>
    <property type="match status" value="1"/>
</dbReference>
<dbReference type="Pfam" id="PF00861">
    <property type="entry name" value="Ribosomal_L18p"/>
    <property type="match status" value="1"/>
</dbReference>
<dbReference type="SUPFAM" id="SSF53137">
    <property type="entry name" value="Translational machinery components"/>
    <property type="match status" value="1"/>
</dbReference>
<comment type="function">
    <text evidence="1">This is one of the proteins that bind and probably mediate the attachment of the 5S RNA into the large ribosomal subunit, where it forms part of the central protuberance.</text>
</comment>
<comment type="subunit">
    <text evidence="1">Part of the 50S ribosomal subunit; part of the 5S rRNA/L5/L18/L25 subcomplex. Contacts the 5S and 23S rRNAs.</text>
</comment>
<comment type="similarity">
    <text evidence="1">Belongs to the universal ribosomal protein uL18 family.</text>
</comment>
<proteinExistence type="inferred from homology"/>
<reference key="1">
    <citation type="submission" date="2008-12" db="EMBL/GenBank/DDBJ databases">
        <title>Complete sequence of chromosome of Methylobacterium chloromethanicum CM4.</title>
        <authorList>
            <consortium name="US DOE Joint Genome Institute"/>
            <person name="Lucas S."/>
            <person name="Copeland A."/>
            <person name="Lapidus A."/>
            <person name="Glavina del Rio T."/>
            <person name="Dalin E."/>
            <person name="Tice H."/>
            <person name="Bruce D."/>
            <person name="Goodwin L."/>
            <person name="Pitluck S."/>
            <person name="Chertkov O."/>
            <person name="Brettin T."/>
            <person name="Detter J.C."/>
            <person name="Han C."/>
            <person name="Larimer F."/>
            <person name="Land M."/>
            <person name="Hauser L."/>
            <person name="Kyrpides N."/>
            <person name="Mikhailova N."/>
            <person name="Marx C."/>
            <person name="Richardson P."/>
        </authorList>
    </citation>
    <scope>NUCLEOTIDE SEQUENCE [LARGE SCALE GENOMIC DNA]</scope>
    <source>
        <strain>CM4 / NCIMB 13688</strain>
    </source>
</reference>
<name>RL18_METC4</name>
<gene>
    <name evidence="1" type="primary">rplR</name>
    <name type="ordered locus">Mchl_2463</name>
</gene>